<protein>
    <recommendedName>
        <fullName>Ciliogenesis-associated TTC17-interacting protein</fullName>
    </recommendedName>
</protein>
<keyword id="KW-1003">Cell membrane</keyword>
<keyword id="KW-0970">Cilium biogenesis/degradation</keyword>
<keyword id="KW-0963">Cytoplasm</keyword>
<keyword id="KW-0206">Cytoskeleton</keyword>
<keyword id="KW-0225">Disease variant</keyword>
<keyword id="KW-0472">Membrane</keyword>
<keyword id="KW-0539">Nucleus</keyword>
<keyword id="KW-1267">Proteomics identification</keyword>
<keyword id="KW-1185">Reference proteome</keyword>
<comment type="function">
    <text evidence="2 3">Plays a role in primary ciliogenesis by modulating actin polymerization.</text>
</comment>
<comment type="subunit">
    <text evidence="2">Interacts with TTC17.</text>
</comment>
<comment type="interaction">
    <interactant intactId="EBI-10258233">
        <id>Q7Z7H3</id>
    </interactant>
    <interactant intactId="EBI-10258305">
        <id>Q9H8M2</id>
        <label>BRD9</label>
    </interactant>
    <organismsDiffer>false</organismsDiffer>
    <experiments>3</experiments>
</comment>
<comment type="interaction">
    <interactant intactId="EBI-10258233">
        <id>Q7Z7H3</id>
    </interactant>
    <interactant intactId="EBI-12834120">
        <id>Q9H8M2-3</id>
        <label>BRD9</label>
    </interactant>
    <organismsDiffer>false</organismsDiffer>
    <experiments>3</experiments>
</comment>
<comment type="interaction">
    <interactant intactId="EBI-10258233">
        <id>Q7Z7H3</id>
    </interactant>
    <interactant intactId="EBI-739498">
        <id>Q9P209</id>
        <label>CEP72</label>
    </interactant>
    <organismsDiffer>false</organismsDiffer>
    <experiments>5</experiments>
</comment>
<comment type="interaction">
    <interactant intactId="EBI-10258233">
        <id>Q7Z7H3</id>
    </interactant>
    <interactant intactId="EBI-748128">
        <id>Q8WYA6</id>
        <label>CTNNBL1</label>
    </interactant>
    <organismsDiffer>false</organismsDiffer>
    <experiments>3</experiments>
</comment>
<comment type="interaction">
    <interactant intactId="EBI-10258233">
        <id>Q7Z7H3</id>
    </interactant>
    <interactant intactId="EBI-3867333">
        <id>A8MQ03</id>
        <label>CYSRT1</label>
    </interactant>
    <organismsDiffer>false</organismsDiffer>
    <experiments>3</experiments>
</comment>
<comment type="interaction">
    <interactant intactId="EBI-10258233">
        <id>Q7Z7H3</id>
    </interactant>
    <interactant intactId="EBI-742054">
        <id>Q96D03</id>
        <label>DDIT4L</label>
    </interactant>
    <organismsDiffer>false</organismsDiffer>
    <experiments>3</experiments>
</comment>
<comment type="interaction">
    <interactant intactId="EBI-10258233">
        <id>Q7Z7H3</id>
    </interactant>
    <interactant intactId="EBI-5916454">
        <id>A6NEM1</id>
        <label>GOLGA6L9</label>
    </interactant>
    <organismsDiffer>false</organismsDiffer>
    <experiments>3</experiments>
</comment>
<comment type="interaction">
    <interactant intactId="EBI-10258233">
        <id>Q7Z7H3</id>
    </interactant>
    <interactant intactId="EBI-8470369">
        <id>Q9UBX0</id>
        <label>HESX1</label>
    </interactant>
    <organismsDiffer>false</organismsDiffer>
    <experiments>3</experiments>
</comment>
<comment type="interaction">
    <interactant intactId="EBI-10258233">
        <id>Q7Z7H3</id>
    </interactant>
    <interactant intactId="EBI-948001">
        <id>Q15323</id>
        <label>KRT31</label>
    </interactant>
    <organismsDiffer>false</organismsDiffer>
    <experiments>6</experiments>
</comment>
<comment type="interaction">
    <interactant intactId="EBI-10258233">
        <id>Q7Z7H3</id>
    </interactant>
    <interactant intactId="EBI-10171697">
        <id>Q6A162</id>
        <label>KRT40</label>
    </interactant>
    <organismsDiffer>false</organismsDiffer>
    <experiments>3</experiments>
</comment>
<comment type="interaction">
    <interactant intactId="EBI-10258233">
        <id>Q7Z7H3</id>
    </interactant>
    <interactant intactId="EBI-11959885">
        <id>Q07627</id>
        <label>KRTAP1-1</label>
    </interactant>
    <organismsDiffer>false</organismsDiffer>
    <experiments>3</experiments>
</comment>
<comment type="interaction">
    <interactant intactId="EBI-10258233">
        <id>Q7Z7H3</id>
    </interactant>
    <interactant intactId="EBI-10172290">
        <id>P60409</id>
        <label>KRTAP10-7</label>
    </interactant>
    <organismsDiffer>false</organismsDiffer>
    <experiments>3</experiments>
</comment>
<comment type="interaction">
    <interactant intactId="EBI-10258233">
        <id>Q7Z7H3</id>
    </interactant>
    <interactant intactId="EBI-10172052">
        <id>P60411</id>
        <label>KRTAP10-9</label>
    </interactant>
    <organismsDiffer>false</organismsDiffer>
    <experiments>3</experiments>
</comment>
<comment type="interaction">
    <interactant intactId="EBI-10258233">
        <id>Q7Z7H3</id>
    </interactant>
    <interactant intactId="EBI-1050881">
        <id>Q5VYS4</id>
        <label>MEDAG</label>
    </interactant>
    <organismsDiffer>false</organismsDiffer>
    <experiments>3</experiments>
</comment>
<comment type="interaction">
    <interactant intactId="EBI-10258233">
        <id>Q7Z7H3</id>
    </interactant>
    <interactant intactId="EBI-742948">
        <id>Q5JR59</id>
        <label>MTUS2</label>
    </interactant>
    <organismsDiffer>false</organismsDiffer>
    <experiments>3</experiments>
</comment>
<comment type="subcellular location">
    <subcellularLocation>
        <location evidence="2 3">Nucleus</location>
    </subcellularLocation>
    <subcellularLocation>
        <location evidence="2 3">Cytoplasm</location>
    </subcellularLocation>
    <subcellularLocation>
        <location evidence="2">Cell membrane</location>
    </subcellularLocation>
    <subcellularLocation>
        <location evidence="2">Cytoplasm</location>
        <location evidence="2">Cytoskeleton</location>
    </subcellularLocation>
    <text>Colocalized with TTC17 at F-actin rich zones and at dynamic plasma membrane protrusions.</text>
</comment>
<comment type="tissue specificity">
    <text evidence="2">Strongly expressed in round and elongating spermatids, weakly in pachytene spermatocytes. Expressed in Leydig cells (at protein level). Expressed in testis, placenta, prostate and lung, and moderately in ovary and brain.</text>
</comment>
<comment type="disease" evidence="3">
    <disease id="DI-06144">
        <name>Spermatogenic failure 54</name>
        <acronym>SPGF54</acronym>
        <description>An autosomal recessive male infertility disorder characterized by oligoteratoasthenozoospermia. Semen analysis shows markedly reduced sperm counts and severely reduced or absent sperm motility.</description>
        <dbReference type="MIM" id="619379"/>
    </disease>
    <text>The disease is caused by variants affecting the gene represented in this entry.</text>
</comment>
<comment type="similarity">
    <text evidence="4">Belongs to the CATIP family.</text>
</comment>
<name>CATIP_HUMAN</name>
<reference key="1">
    <citation type="journal article" date="2005" name="Nature">
        <title>Generation and annotation of the DNA sequences of human chromosomes 2 and 4.</title>
        <authorList>
            <person name="Hillier L.W."/>
            <person name="Graves T.A."/>
            <person name="Fulton R.S."/>
            <person name="Fulton L.A."/>
            <person name="Pepin K.H."/>
            <person name="Minx P."/>
            <person name="Wagner-McPherson C."/>
            <person name="Layman D."/>
            <person name="Wylie K."/>
            <person name="Sekhon M."/>
            <person name="Becker M.C."/>
            <person name="Fewell G.A."/>
            <person name="Delehaunty K.D."/>
            <person name="Miner T.L."/>
            <person name="Nash W.E."/>
            <person name="Kremitzki C."/>
            <person name="Oddy L."/>
            <person name="Du H."/>
            <person name="Sun H."/>
            <person name="Bradshaw-Cordum H."/>
            <person name="Ali J."/>
            <person name="Carter J."/>
            <person name="Cordes M."/>
            <person name="Harris A."/>
            <person name="Isak A."/>
            <person name="van Brunt A."/>
            <person name="Nguyen C."/>
            <person name="Du F."/>
            <person name="Courtney L."/>
            <person name="Kalicki J."/>
            <person name="Ozersky P."/>
            <person name="Abbott S."/>
            <person name="Armstrong J."/>
            <person name="Belter E.A."/>
            <person name="Caruso L."/>
            <person name="Cedroni M."/>
            <person name="Cotton M."/>
            <person name="Davidson T."/>
            <person name="Desai A."/>
            <person name="Elliott G."/>
            <person name="Erb T."/>
            <person name="Fronick C."/>
            <person name="Gaige T."/>
            <person name="Haakenson W."/>
            <person name="Haglund K."/>
            <person name="Holmes A."/>
            <person name="Harkins R."/>
            <person name="Kim K."/>
            <person name="Kruchowski S.S."/>
            <person name="Strong C.M."/>
            <person name="Grewal N."/>
            <person name="Goyea E."/>
            <person name="Hou S."/>
            <person name="Levy A."/>
            <person name="Martinka S."/>
            <person name="Mead K."/>
            <person name="McLellan M.D."/>
            <person name="Meyer R."/>
            <person name="Randall-Maher J."/>
            <person name="Tomlinson C."/>
            <person name="Dauphin-Kohlberg S."/>
            <person name="Kozlowicz-Reilly A."/>
            <person name="Shah N."/>
            <person name="Swearengen-Shahid S."/>
            <person name="Snider J."/>
            <person name="Strong J.T."/>
            <person name="Thompson J."/>
            <person name="Yoakum M."/>
            <person name="Leonard S."/>
            <person name="Pearman C."/>
            <person name="Trani L."/>
            <person name="Radionenko M."/>
            <person name="Waligorski J.E."/>
            <person name="Wang C."/>
            <person name="Rock S.M."/>
            <person name="Tin-Wollam A.-M."/>
            <person name="Maupin R."/>
            <person name="Latreille P."/>
            <person name="Wendl M.C."/>
            <person name="Yang S.-P."/>
            <person name="Pohl C."/>
            <person name="Wallis J.W."/>
            <person name="Spieth J."/>
            <person name="Bieri T.A."/>
            <person name="Berkowicz N."/>
            <person name="Nelson J.O."/>
            <person name="Osborne J."/>
            <person name="Ding L."/>
            <person name="Meyer R."/>
            <person name="Sabo A."/>
            <person name="Shotland Y."/>
            <person name="Sinha P."/>
            <person name="Wohldmann P.E."/>
            <person name="Cook L.L."/>
            <person name="Hickenbotham M.T."/>
            <person name="Eldred J."/>
            <person name="Williams D."/>
            <person name="Jones T.A."/>
            <person name="She X."/>
            <person name="Ciccarelli F.D."/>
            <person name="Izaurralde E."/>
            <person name="Taylor J."/>
            <person name="Schmutz J."/>
            <person name="Myers R.M."/>
            <person name="Cox D.R."/>
            <person name="Huang X."/>
            <person name="McPherson J.D."/>
            <person name="Mardis E.R."/>
            <person name="Clifton S.W."/>
            <person name="Warren W.C."/>
            <person name="Chinwalla A.T."/>
            <person name="Eddy S.R."/>
            <person name="Marra M.A."/>
            <person name="Ovcharenko I."/>
            <person name="Furey T.S."/>
            <person name="Miller W."/>
            <person name="Eichler E.E."/>
            <person name="Bork P."/>
            <person name="Suyama M."/>
            <person name="Torrents D."/>
            <person name="Waterston R.H."/>
            <person name="Wilson R.K."/>
        </authorList>
    </citation>
    <scope>NUCLEOTIDE SEQUENCE [LARGE SCALE GENOMIC DNA]</scope>
</reference>
<reference key="2">
    <citation type="submission" date="2005-07" db="EMBL/GenBank/DDBJ databases">
        <authorList>
            <person name="Mural R.J."/>
            <person name="Istrail S."/>
            <person name="Sutton G.G."/>
            <person name="Florea L."/>
            <person name="Halpern A.L."/>
            <person name="Mobarry C.M."/>
            <person name="Lippert R."/>
            <person name="Walenz B."/>
            <person name="Shatkay H."/>
            <person name="Dew I."/>
            <person name="Miller J.R."/>
            <person name="Flanigan M.J."/>
            <person name="Edwards N.J."/>
            <person name="Bolanos R."/>
            <person name="Fasulo D."/>
            <person name="Halldorsson B.V."/>
            <person name="Hannenhalli S."/>
            <person name="Turner R."/>
            <person name="Yooseph S."/>
            <person name="Lu F."/>
            <person name="Nusskern D.R."/>
            <person name="Shue B.C."/>
            <person name="Zheng X.H."/>
            <person name="Zhong F."/>
            <person name="Delcher A.L."/>
            <person name="Huson D.H."/>
            <person name="Kravitz S.A."/>
            <person name="Mouchard L."/>
            <person name="Reinert K."/>
            <person name="Remington K.A."/>
            <person name="Clark A.G."/>
            <person name="Waterman M.S."/>
            <person name="Eichler E.E."/>
            <person name="Adams M.D."/>
            <person name="Hunkapiller M.W."/>
            <person name="Myers E.W."/>
            <person name="Venter J.C."/>
        </authorList>
    </citation>
    <scope>NUCLEOTIDE SEQUENCE [LARGE SCALE GENOMIC DNA]</scope>
</reference>
<reference key="3">
    <citation type="journal article" date="2004" name="Genome Res.">
        <title>The status, quality, and expansion of the NIH full-length cDNA project: the Mammalian Gene Collection (MGC).</title>
        <authorList>
            <consortium name="The MGC Project Team"/>
        </authorList>
    </citation>
    <scope>NUCLEOTIDE SEQUENCE [LARGE SCALE MRNA]</scope>
    <source>
        <tissue>Brain</tissue>
    </source>
</reference>
<reference key="4">
    <citation type="journal article" date="2014" name="PLoS ONE">
        <title>C2orf62 and TTC17 Are Involved in Actin Organization and Ciliogenesis in Zebrafish and Human.</title>
        <authorList>
            <person name="Bontems F."/>
            <person name="Fish R.J."/>
            <person name="Borlat I."/>
            <person name="Lembo F."/>
            <person name="Chocu S."/>
            <person name="Chalmel F."/>
            <person name="Borg J.P."/>
            <person name="Pineau C."/>
            <person name="Neerman-Arbez M."/>
            <person name="Bairoch A."/>
            <person name="Lane L."/>
        </authorList>
    </citation>
    <scope>FUNCTION</scope>
    <scope>INTERACTION WITH TTC17</scope>
    <scope>SUBCELLULAR LOCATION</scope>
    <scope>TISSUE SPECIFICITY</scope>
</reference>
<reference key="5">
    <citation type="journal article" date="2020" name="J. Med. Genet.">
        <title>Mutation in CATIP (C2orf62) causes oligoteratoasthenozoospermia by affecting actin dynamics.</title>
        <authorList>
            <person name="Arafat M."/>
            <person name="Harlev A."/>
            <person name="Har-Vardi I."/>
            <person name="Levitas E."/>
            <person name="Priel T."/>
            <person name="Gershoni M."/>
            <person name="Searby C."/>
            <person name="Sheffield V.C."/>
            <person name="Lunenfeld E."/>
            <person name="Parvari R."/>
        </authorList>
    </citation>
    <scope>INVOLVEMENT IN SPGF54</scope>
    <scope>VARIANT SPGF54 ILE-35</scope>
    <scope>CHARACTERIZATION OF VARIANT SPGF54 ILE-35</scope>
    <scope>SUBCELLULAR LOCATION</scope>
    <scope>FUNCTION</scope>
</reference>
<organism>
    <name type="scientific">Homo sapiens</name>
    <name type="common">Human</name>
    <dbReference type="NCBI Taxonomy" id="9606"/>
    <lineage>
        <taxon>Eukaryota</taxon>
        <taxon>Metazoa</taxon>
        <taxon>Chordata</taxon>
        <taxon>Craniata</taxon>
        <taxon>Vertebrata</taxon>
        <taxon>Euteleostomi</taxon>
        <taxon>Mammalia</taxon>
        <taxon>Eutheria</taxon>
        <taxon>Euarchontoglires</taxon>
        <taxon>Primates</taxon>
        <taxon>Haplorrhini</taxon>
        <taxon>Catarrhini</taxon>
        <taxon>Hominidae</taxon>
        <taxon>Homo</taxon>
    </lineage>
</organism>
<feature type="chain" id="PRO_0000309187" description="Ciliogenesis-associated TTC17-interacting protein">
    <location>
        <begin position="1"/>
        <end position="387"/>
    </location>
</feature>
<feature type="region of interest" description="Disordered" evidence="1">
    <location>
        <begin position="1"/>
        <end position="21"/>
    </location>
</feature>
<feature type="region of interest" description="Disordered" evidence="1">
    <location>
        <begin position="361"/>
        <end position="387"/>
    </location>
</feature>
<feature type="compositionally biased region" description="Polar residues" evidence="1">
    <location>
        <begin position="1"/>
        <end position="10"/>
    </location>
</feature>
<feature type="compositionally biased region" description="Basic and acidic residues" evidence="1">
    <location>
        <begin position="376"/>
        <end position="387"/>
    </location>
</feature>
<feature type="sequence variant" id="VAR_085385" description="In SPGF54; reduces the protein stability. Increases the kinetics of actin polymerisation; dbSNP:rs141560868." evidence="3">
    <original>F</original>
    <variation>I</variation>
    <location>
        <position position="35"/>
    </location>
</feature>
<gene>
    <name type="primary">CATIP</name>
    <name type="synonym">C2orf62</name>
</gene>
<dbReference type="EMBL" id="AC021016">
    <property type="status" value="NOT_ANNOTATED_CDS"/>
    <property type="molecule type" value="Genomic_DNA"/>
</dbReference>
<dbReference type="EMBL" id="CH471063">
    <property type="protein sequence ID" value="EAW70610.1"/>
    <property type="molecule type" value="Genomic_DNA"/>
</dbReference>
<dbReference type="EMBL" id="BC052750">
    <property type="protein sequence ID" value="AAH52750.1"/>
    <property type="molecule type" value="mRNA"/>
</dbReference>
<dbReference type="CCDS" id="CCDS2414.1"/>
<dbReference type="RefSeq" id="NP_001307794.1">
    <property type="nucleotide sequence ID" value="NM_001320865.1"/>
</dbReference>
<dbReference type="RefSeq" id="NP_940961.1">
    <property type="nucleotide sequence ID" value="NM_198559.2"/>
</dbReference>
<dbReference type="SMR" id="Q7Z7H3"/>
<dbReference type="BioGRID" id="131969">
    <property type="interactions" value="17"/>
</dbReference>
<dbReference type="FunCoup" id="Q7Z7H3">
    <property type="interactions" value="364"/>
</dbReference>
<dbReference type="IntAct" id="Q7Z7H3">
    <property type="interactions" value="15"/>
</dbReference>
<dbReference type="STRING" id="9606.ENSP00000289388"/>
<dbReference type="iPTMnet" id="Q7Z7H3"/>
<dbReference type="PhosphoSitePlus" id="Q7Z7H3"/>
<dbReference type="BioMuta" id="CATIP"/>
<dbReference type="DMDM" id="74738883"/>
<dbReference type="MassIVE" id="Q7Z7H3"/>
<dbReference type="PaxDb" id="9606-ENSP00000289388"/>
<dbReference type="PeptideAtlas" id="Q7Z7H3"/>
<dbReference type="ProteomicsDB" id="69547"/>
<dbReference type="Antibodypedia" id="34269">
    <property type="antibodies" value="300 antibodies from 12 providers"/>
</dbReference>
<dbReference type="DNASU" id="375307"/>
<dbReference type="Ensembl" id="ENST00000289388.4">
    <property type="protein sequence ID" value="ENSP00000289388.3"/>
    <property type="gene ID" value="ENSG00000158428.5"/>
</dbReference>
<dbReference type="GeneID" id="375307"/>
<dbReference type="KEGG" id="hsa:375307"/>
<dbReference type="MANE-Select" id="ENST00000289388.4">
    <property type="protein sequence ID" value="ENSP00000289388.3"/>
    <property type="RefSeq nucleotide sequence ID" value="NM_198559.2"/>
    <property type="RefSeq protein sequence ID" value="NP_940961.1"/>
</dbReference>
<dbReference type="UCSC" id="uc002vhr.3">
    <property type="organism name" value="human"/>
</dbReference>
<dbReference type="AGR" id="HGNC:25062"/>
<dbReference type="CTD" id="375307"/>
<dbReference type="DisGeNET" id="375307"/>
<dbReference type="GeneCards" id="CATIP"/>
<dbReference type="HGNC" id="HGNC:25062">
    <property type="gene designation" value="CATIP"/>
</dbReference>
<dbReference type="HPA" id="ENSG00000158428">
    <property type="expression patterns" value="Tissue enhanced (choroid plexus, fallopian tube)"/>
</dbReference>
<dbReference type="MalaCards" id="CATIP"/>
<dbReference type="MIM" id="619379">
    <property type="type" value="phenotype"/>
</dbReference>
<dbReference type="MIM" id="619387">
    <property type="type" value="gene"/>
</dbReference>
<dbReference type="neXtProt" id="NX_Q7Z7H3"/>
<dbReference type="OpenTargets" id="ENSG00000158428"/>
<dbReference type="Orphanet" id="399805">
    <property type="disease" value="Male infertility with azoospermia or oligozoospermia due to single gene mutation"/>
</dbReference>
<dbReference type="PharmGKB" id="PA162379334"/>
<dbReference type="VEuPathDB" id="HostDB:ENSG00000158428"/>
<dbReference type="eggNOG" id="ENOG502QPJE">
    <property type="taxonomic scope" value="Eukaryota"/>
</dbReference>
<dbReference type="GeneTree" id="ENSGT00940000154101"/>
<dbReference type="HOGENOM" id="CLU_041155_0_0_1"/>
<dbReference type="InParanoid" id="Q7Z7H3"/>
<dbReference type="OMA" id="SPGCCMI"/>
<dbReference type="OrthoDB" id="6334211at2759"/>
<dbReference type="PAN-GO" id="Q7Z7H3">
    <property type="GO annotations" value="2 GO annotations based on evolutionary models"/>
</dbReference>
<dbReference type="PhylomeDB" id="Q7Z7H3"/>
<dbReference type="TreeFam" id="TF328954"/>
<dbReference type="PathwayCommons" id="Q7Z7H3"/>
<dbReference type="SignaLink" id="Q7Z7H3"/>
<dbReference type="BioGRID-ORCS" id="375307">
    <property type="hits" value="9 hits in 1146 CRISPR screens"/>
</dbReference>
<dbReference type="GenomeRNAi" id="375307"/>
<dbReference type="Pharos" id="Q7Z7H3">
    <property type="development level" value="Tbio"/>
</dbReference>
<dbReference type="PRO" id="PR:Q7Z7H3"/>
<dbReference type="Proteomes" id="UP000005640">
    <property type="component" value="Chromosome 2"/>
</dbReference>
<dbReference type="RNAct" id="Q7Z7H3">
    <property type="molecule type" value="protein"/>
</dbReference>
<dbReference type="Bgee" id="ENSG00000158428">
    <property type="expression patterns" value="Expressed in right uterine tube and 93 other cell types or tissues"/>
</dbReference>
<dbReference type="GO" id="GO:0015629">
    <property type="term" value="C:actin cytoskeleton"/>
    <property type="evidence" value="ECO:0000314"/>
    <property type="project" value="UniProtKB"/>
</dbReference>
<dbReference type="GO" id="GO:0005737">
    <property type="term" value="C:cytoplasm"/>
    <property type="evidence" value="ECO:0000314"/>
    <property type="project" value="UniProtKB"/>
</dbReference>
<dbReference type="GO" id="GO:0005634">
    <property type="term" value="C:nucleus"/>
    <property type="evidence" value="ECO:0000314"/>
    <property type="project" value="UniProtKB"/>
</dbReference>
<dbReference type="GO" id="GO:0005886">
    <property type="term" value="C:plasma membrane"/>
    <property type="evidence" value="ECO:0000314"/>
    <property type="project" value="UniProtKB"/>
</dbReference>
<dbReference type="GO" id="GO:0030041">
    <property type="term" value="P:actin filament polymerization"/>
    <property type="evidence" value="ECO:0000314"/>
    <property type="project" value="UniProtKB"/>
</dbReference>
<dbReference type="GO" id="GO:0044782">
    <property type="term" value="P:cilium organization"/>
    <property type="evidence" value="ECO:0000315"/>
    <property type="project" value="UniProtKB"/>
</dbReference>
<dbReference type="CDD" id="cd22973">
    <property type="entry name" value="DD_CATIP"/>
    <property type="match status" value="1"/>
</dbReference>
<dbReference type="InterPro" id="IPR048777">
    <property type="entry name" value="CATIP_N"/>
</dbReference>
<dbReference type="InterPro" id="IPR047501">
    <property type="entry name" value="DD_CATIP"/>
</dbReference>
<dbReference type="PANTHER" id="PTHR15505:SF3">
    <property type="entry name" value="CILIOGENESIS-ASSOCIATED TTC17-INTERACTING PROTEIN"/>
    <property type="match status" value="1"/>
</dbReference>
<dbReference type="PANTHER" id="PTHR15505">
    <property type="entry name" value="RIIA DOMAIN-CONTAINING PROTEIN 1"/>
    <property type="match status" value="1"/>
</dbReference>
<dbReference type="Pfam" id="PF21772">
    <property type="entry name" value="CATIP_N"/>
    <property type="match status" value="1"/>
</dbReference>
<dbReference type="SUPFAM" id="SSF47391">
    <property type="entry name" value="Dimerization-anchoring domain of cAMP-dependent PK regulatory subunit"/>
    <property type="match status" value="1"/>
</dbReference>
<evidence type="ECO:0000256" key="1">
    <source>
        <dbReference type="SAM" id="MobiDB-lite"/>
    </source>
</evidence>
<evidence type="ECO:0000269" key="2">
    <source>
    </source>
</evidence>
<evidence type="ECO:0000269" key="3">
    <source>
    </source>
</evidence>
<evidence type="ECO:0000305" key="4"/>
<proteinExistence type="evidence at protein level"/>
<accession>Q7Z7H3</accession>
<sequence>MSSKVYSTGSRAKDHQPSGPECLPLPEANAEAIDFLSSLHKEELQMLFFSETLAMVSDTGEPQGELTIEVQRGKYQEKLGMLTYCLFVHASSRGFLDKMLCGNSLLGYLSEKLELMEQHSQDFIKFLILPMERKMSLLKQDDQLAVTRSIKEGEEVKTGVTSFPWSSIKGFISEAANLVLLRVMAWRRMVPSNARFLTLDTEGKLCYLTYQNLGFQTIQVDHQQAEVFIVEQTVHAEEGIPMSCQYYLLSDGHLAKRIQVGSPGCCIITKMPILREEDEIEPRPVFEKKPLVWEEDMELYSKFLDRKEELRLGHASYLRQHPEAHALISDFLLFLLLRQPEDVVTFAAEFFGPFDPWRPSSPALGSSHRPNPFRSLEPEGDARSGAA</sequence>